<name>SPEH_THEP1</name>
<dbReference type="EC" id="4.1.1.50" evidence="1"/>
<dbReference type="EMBL" id="CP000702">
    <property type="protein sequence ID" value="ABQ46305.1"/>
    <property type="molecule type" value="Genomic_DNA"/>
</dbReference>
<dbReference type="SMR" id="A5IJD2"/>
<dbReference type="STRING" id="390874.Tpet_0276"/>
<dbReference type="KEGG" id="tpt:Tpet_0276"/>
<dbReference type="eggNOG" id="COG1586">
    <property type="taxonomic scope" value="Bacteria"/>
</dbReference>
<dbReference type="HOGENOM" id="CLU_125470_2_3_0"/>
<dbReference type="UniPathway" id="UPA00331">
    <property type="reaction ID" value="UER00451"/>
</dbReference>
<dbReference type="Proteomes" id="UP000006558">
    <property type="component" value="Chromosome"/>
</dbReference>
<dbReference type="GO" id="GO:0005829">
    <property type="term" value="C:cytosol"/>
    <property type="evidence" value="ECO:0007669"/>
    <property type="project" value="TreeGrafter"/>
</dbReference>
<dbReference type="GO" id="GO:0004014">
    <property type="term" value="F:adenosylmethionine decarboxylase activity"/>
    <property type="evidence" value="ECO:0007669"/>
    <property type="project" value="UniProtKB-UniRule"/>
</dbReference>
<dbReference type="GO" id="GO:0008295">
    <property type="term" value="P:spermidine biosynthetic process"/>
    <property type="evidence" value="ECO:0007669"/>
    <property type="project" value="UniProtKB-UniRule"/>
</dbReference>
<dbReference type="FunFam" id="3.30.160.750:FF:000004">
    <property type="entry name" value="S-adenosylmethionine decarboxylase proenzyme"/>
    <property type="match status" value="1"/>
</dbReference>
<dbReference type="FunFam" id="3.30.360.110:FF:000001">
    <property type="entry name" value="S-adenosylmethionine decarboxylase proenzyme"/>
    <property type="match status" value="1"/>
</dbReference>
<dbReference type="Gene3D" id="3.30.160.750">
    <property type="match status" value="1"/>
</dbReference>
<dbReference type="Gene3D" id="3.30.360.110">
    <property type="entry name" value="S-adenosylmethionine decarboxylase domain"/>
    <property type="match status" value="1"/>
</dbReference>
<dbReference type="HAMAP" id="MF_00464">
    <property type="entry name" value="AdoMetDC_1"/>
    <property type="match status" value="1"/>
</dbReference>
<dbReference type="InterPro" id="IPR042286">
    <property type="entry name" value="AdoMetDC_C"/>
</dbReference>
<dbReference type="InterPro" id="IPR003826">
    <property type="entry name" value="AdoMetDC_fam_prok"/>
</dbReference>
<dbReference type="InterPro" id="IPR042284">
    <property type="entry name" value="AdoMetDC_N"/>
</dbReference>
<dbReference type="InterPro" id="IPR016067">
    <property type="entry name" value="S-AdoMet_deCO2ase_core"/>
</dbReference>
<dbReference type="InterPro" id="IPR017716">
    <property type="entry name" value="S-AdoMet_deCOase_pro-enz"/>
</dbReference>
<dbReference type="NCBIfam" id="TIGR03330">
    <property type="entry name" value="SAM_DCase_Bsu"/>
    <property type="match status" value="1"/>
</dbReference>
<dbReference type="PANTHER" id="PTHR33866">
    <property type="entry name" value="S-ADENOSYLMETHIONINE DECARBOXYLASE PROENZYME"/>
    <property type="match status" value="1"/>
</dbReference>
<dbReference type="PANTHER" id="PTHR33866:SF2">
    <property type="entry name" value="S-ADENOSYLMETHIONINE DECARBOXYLASE PROENZYME"/>
    <property type="match status" value="1"/>
</dbReference>
<dbReference type="Pfam" id="PF02675">
    <property type="entry name" value="AdoMet_dc"/>
    <property type="match status" value="1"/>
</dbReference>
<dbReference type="SUPFAM" id="SSF56276">
    <property type="entry name" value="S-adenosylmethionine decarboxylase"/>
    <property type="match status" value="1"/>
</dbReference>
<organism>
    <name type="scientific">Thermotoga petrophila (strain ATCC BAA-488 / DSM 13995 / JCM 10881 / RKU-1)</name>
    <dbReference type="NCBI Taxonomy" id="390874"/>
    <lineage>
        <taxon>Bacteria</taxon>
        <taxon>Thermotogati</taxon>
        <taxon>Thermotogota</taxon>
        <taxon>Thermotogae</taxon>
        <taxon>Thermotogales</taxon>
        <taxon>Thermotogaceae</taxon>
        <taxon>Thermotoga</taxon>
    </lineage>
</organism>
<accession>A5IJD2</accession>
<protein>
    <recommendedName>
        <fullName evidence="1">S-adenosylmethionine decarboxylase proenzyme</fullName>
        <shortName evidence="1">AdoMetDC</shortName>
        <shortName evidence="1">SAMDC</shortName>
        <ecNumber evidence="1">4.1.1.50</ecNumber>
    </recommendedName>
    <component>
        <recommendedName>
            <fullName evidence="1">S-adenosylmethionine decarboxylase beta chain</fullName>
        </recommendedName>
    </component>
    <component>
        <recommendedName>
            <fullName evidence="1">S-adenosylmethionine decarboxylase alpha chain</fullName>
        </recommendedName>
    </component>
</protein>
<sequence>MKSLGRHLVAEFYECDKEVLDNVQLIEQEMKQAAYESGATIVTSTFHRFLPYGVSGVVVISESHLTIHTWPEYGYAAIDLFTCGEDVDPWKAFEHLKKALKAKRVHVVEHERGRYDEIGIPEDSPHKVTV</sequence>
<comment type="function">
    <text evidence="1">Catalyzes the decarboxylation of S-adenosylmethionine to S-adenosylmethioninamine (dcAdoMet), the propylamine donor required for the synthesis of the polyamines spermine and spermidine from the diamine putrescine.</text>
</comment>
<comment type="catalytic activity">
    <reaction evidence="1">
        <text>S-adenosyl-L-methionine + H(+) = S-adenosyl 3-(methylsulfanyl)propylamine + CO2</text>
        <dbReference type="Rhea" id="RHEA:15981"/>
        <dbReference type="ChEBI" id="CHEBI:15378"/>
        <dbReference type="ChEBI" id="CHEBI:16526"/>
        <dbReference type="ChEBI" id="CHEBI:57443"/>
        <dbReference type="ChEBI" id="CHEBI:59789"/>
        <dbReference type="EC" id="4.1.1.50"/>
    </reaction>
</comment>
<comment type="cofactor">
    <cofactor evidence="1">
        <name>pyruvate</name>
        <dbReference type="ChEBI" id="CHEBI:15361"/>
    </cofactor>
    <text evidence="1">Binds 1 pyruvoyl group covalently per subunit.</text>
</comment>
<comment type="pathway">
    <text evidence="1">Amine and polyamine biosynthesis; S-adenosylmethioninamine biosynthesis; S-adenosylmethioninamine from S-adenosyl-L-methionine: step 1/1.</text>
</comment>
<comment type="subunit">
    <text evidence="1">Heterotetramer of two alpha and two beta chains arranged as a dimer of alpha/beta heterodimers.</text>
</comment>
<comment type="PTM">
    <text evidence="1">Is synthesized initially as an inactive proenzyme. Formation of the active enzyme involves a self-maturation process in which the active site pyruvoyl group is generated from an internal serine residue via an autocatalytic post-translational modification. Two non-identical subunits are generated from the proenzyme in this reaction, and the pyruvate is formed at the N-terminus of the alpha chain, which is derived from the carboxyl end of the proenzyme. The post-translation cleavage follows an unusual pathway, termed non-hydrolytic serinolysis, in which the side chain hydroxyl group of the serine supplies its oxygen atom to form the C-terminus of the beta chain, while the remainder of the serine residue undergoes an oxidative deamination to produce ammonia and the pyruvoyl group blocking the N-terminus of the alpha chain.</text>
</comment>
<comment type="similarity">
    <text evidence="1">Belongs to the prokaryotic AdoMetDC family. Type 1 subfamily.</text>
</comment>
<gene>
    <name evidence="1" type="primary">speH</name>
    <name type="ordered locus">Tpet_0276</name>
</gene>
<keyword id="KW-0068">Autocatalytic cleavage</keyword>
<keyword id="KW-0210">Decarboxylase</keyword>
<keyword id="KW-0456">Lyase</keyword>
<keyword id="KW-0620">Polyamine biosynthesis</keyword>
<keyword id="KW-0670">Pyruvate</keyword>
<keyword id="KW-0949">S-adenosyl-L-methionine</keyword>
<keyword id="KW-0704">Schiff base</keyword>
<keyword id="KW-0745">Spermidine biosynthesis</keyword>
<keyword id="KW-0865">Zymogen</keyword>
<feature type="chain" id="PRO_1000013687" description="S-adenosylmethionine decarboxylase beta chain" evidence="1">
    <location>
        <begin position="1"/>
        <end position="62"/>
    </location>
</feature>
<feature type="chain" id="PRO_0000315036" description="S-adenosylmethionine decarboxylase alpha chain" evidence="1">
    <location>
        <begin position="63"/>
        <end position="130"/>
    </location>
</feature>
<feature type="active site" description="Schiff-base intermediate with substrate; via pyruvic acid" evidence="1">
    <location>
        <position position="63"/>
    </location>
</feature>
<feature type="active site" description="Proton acceptor; for processing activity" evidence="1">
    <location>
        <position position="68"/>
    </location>
</feature>
<feature type="active site" description="Proton donor; for catalytic activity" evidence="1">
    <location>
        <position position="83"/>
    </location>
</feature>
<feature type="site" description="Cleavage (non-hydrolytic); by autolysis" evidence="1">
    <location>
        <begin position="62"/>
        <end position="63"/>
    </location>
</feature>
<feature type="modified residue" description="Pyruvic acid (Ser); by autocatalysis" evidence="1">
    <location>
        <position position="63"/>
    </location>
</feature>
<reference key="1">
    <citation type="submission" date="2007-05" db="EMBL/GenBank/DDBJ databases">
        <title>Complete sequence of Thermotoga petrophila RKU-1.</title>
        <authorList>
            <consortium name="US DOE Joint Genome Institute"/>
            <person name="Copeland A."/>
            <person name="Lucas S."/>
            <person name="Lapidus A."/>
            <person name="Barry K."/>
            <person name="Glavina del Rio T."/>
            <person name="Dalin E."/>
            <person name="Tice H."/>
            <person name="Pitluck S."/>
            <person name="Sims D."/>
            <person name="Brettin T."/>
            <person name="Bruce D."/>
            <person name="Detter J.C."/>
            <person name="Han C."/>
            <person name="Tapia R."/>
            <person name="Schmutz J."/>
            <person name="Larimer F."/>
            <person name="Land M."/>
            <person name="Hauser L."/>
            <person name="Kyrpides N."/>
            <person name="Mikhailova N."/>
            <person name="Nelson K."/>
            <person name="Gogarten J.P."/>
            <person name="Noll K."/>
            <person name="Richardson P."/>
        </authorList>
    </citation>
    <scope>NUCLEOTIDE SEQUENCE [LARGE SCALE GENOMIC DNA]</scope>
    <source>
        <strain>ATCC BAA-488 / DSM 13995 / JCM 10881 / RKU-1</strain>
    </source>
</reference>
<proteinExistence type="inferred from homology"/>
<evidence type="ECO:0000255" key="1">
    <source>
        <dbReference type="HAMAP-Rule" id="MF_00464"/>
    </source>
</evidence>